<reference key="1">
    <citation type="submission" date="2005-03" db="EMBL/GenBank/DDBJ databases">
        <title>Brevibacillus brevis strain 47, complete genome.</title>
        <authorList>
            <person name="Hosoyama A."/>
            <person name="Yamada R."/>
            <person name="Hongo Y."/>
            <person name="Terui Y."/>
            <person name="Ankai A."/>
            <person name="Masuyama W."/>
            <person name="Sekiguchi M."/>
            <person name="Takeda T."/>
            <person name="Asano K."/>
            <person name="Ohji S."/>
            <person name="Ichikawa N."/>
            <person name="Narita S."/>
            <person name="Aoki N."/>
            <person name="Miura H."/>
            <person name="Matsushita S."/>
            <person name="Sekigawa T."/>
            <person name="Yamagata H."/>
            <person name="Yoshikawa H."/>
            <person name="Udaka S."/>
            <person name="Tanikawa S."/>
            <person name="Fujita N."/>
        </authorList>
    </citation>
    <scope>NUCLEOTIDE SEQUENCE [LARGE SCALE GENOMIC DNA]</scope>
    <source>
        <strain>47 / JCM 6285 / NBRC 100599</strain>
    </source>
</reference>
<comment type="function">
    <text evidence="1">One of the primary rRNA binding proteins, it binds specifically to the 5'-end of 16S ribosomal RNA.</text>
</comment>
<comment type="subunit">
    <text evidence="1">Part of the 30S ribosomal subunit.</text>
</comment>
<comment type="similarity">
    <text evidence="1">Belongs to the universal ribosomal protein uS17 family.</text>
</comment>
<organism>
    <name type="scientific">Brevibacillus brevis (strain 47 / JCM 6285 / NBRC 100599)</name>
    <dbReference type="NCBI Taxonomy" id="358681"/>
    <lineage>
        <taxon>Bacteria</taxon>
        <taxon>Bacillati</taxon>
        <taxon>Bacillota</taxon>
        <taxon>Bacilli</taxon>
        <taxon>Bacillales</taxon>
        <taxon>Paenibacillaceae</taxon>
        <taxon>Brevibacillus</taxon>
    </lineage>
</organism>
<protein>
    <recommendedName>
        <fullName evidence="1">Small ribosomal subunit protein uS17</fullName>
    </recommendedName>
    <alternativeName>
        <fullName evidence="2">30S ribosomal protein S17</fullName>
    </alternativeName>
</protein>
<proteinExistence type="inferred from homology"/>
<name>RS17_BREBN</name>
<keyword id="KW-1185">Reference proteome</keyword>
<keyword id="KW-0687">Ribonucleoprotein</keyword>
<keyword id="KW-0689">Ribosomal protein</keyword>
<keyword id="KW-0694">RNA-binding</keyword>
<keyword id="KW-0699">rRNA-binding</keyword>
<gene>
    <name evidence="1" type="primary">rpsQ</name>
    <name type="ordered locus">BBR47_02300</name>
</gene>
<sequence length="88" mass="10265">MTADRNMRRTVVGRVVSDKMDKTIVVLVETYKTHPLYGKRMKFSKKFKAHDENNTAKVGDIVEIMETRPLSKDKRFRLVRIVEEAVIV</sequence>
<accession>C0ZII9</accession>
<feature type="chain" id="PRO_1000166464" description="Small ribosomal subunit protein uS17">
    <location>
        <begin position="1"/>
        <end position="88"/>
    </location>
</feature>
<evidence type="ECO:0000255" key="1">
    <source>
        <dbReference type="HAMAP-Rule" id="MF_01345"/>
    </source>
</evidence>
<evidence type="ECO:0000305" key="2"/>
<dbReference type="EMBL" id="AP008955">
    <property type="protein sequence ID" value="BAH41207.1"/>
    <property type="molecule type" value="Genomic_DNA"/>
</dbReference>
<dbReference type="RefSeq" id="WP_012683989.1">
    <property type="nucleotide sequence ID" value="NC_012491.1"/>
</dbReference>
<dbReference type="SMR" id="C0ZII9"/>
<dbReference type="STRING" id="358681.BBR47_02300"/>
<dbReference type="GeneID" id="87588862"/>
<dbReference type="KEGG" id="bbe:BBR47_02300"/>
<dbReference type="eggNOG" id="COG0186">
    <property type="taxonomic scope" value="Bacteria"/>
</dbReference>
<dbReference type="HOGENOM" id="CLU_073626_1_0_9"/>
<dbReference type="Proteomes" id="UP000001877">
    <property type="component" value="Chromosome"/>
</dbReference>
<dbReference type="GO" id="GO:0022627">
    <property type="term" value="C:cytosolic small ribosomal subunit"/>
    <property type="evidence" value="ECO:0007669"/>
    <property type="project" value="TreeGrafter"/>
</dbReference>
<dbReference type="GO" id="GO:0019843">
    <property type="term" value="F:rRNA binding"/>
    <property type="evidence" value="ECO:0007669"/>
    <property type="project" value="UniProtKB-UniRule"/>
</dbReference>
<dbReference type="GO" id="GO:0003735">
    <property type="term" value="F:structural constituent of ribosome"/>
    <property type="evidence" value="ECO:0007669"/>
    <property type="project" value="InterPro"/>
</dbReference>
<dbReference type="GO" id="GO:0006412">
    <property type="term" value="P:translation"/>
    <property type="evidence" value="ECO:0007669"/>
    <property type="project" value="UniProtKB-UniRule"/>
</dbReference>
<dbReference type="CDD" id="cd00364">
    <property type="entry name" value="Ribosomal_uS17"/>
    <property type="match status" value="1"/>
</dbReference>
<dbReference type="FunFam" id="2.40.50.140:FF:000026">
    <property type="entry name" value="30S ribosomal protein S17"/>
    <property type="match status" value="1"/>
</dbReference>
<dbReference type="Gene3D" id="2.40.50.140">
    <property type="entry name" value="Nucleic acid-binding proteins"/>
    <property type="match status" value="1"/>
</dbReference>
<dbReference type="HAMAP" id="MF_01345_B">
    <property type="entry name" value="Ribosomal_uS17_B"/>
    <property type="match status" value="1"/>
</dbReference>
<dbReference type="InterPro" id="IPR012340">
    <property type="entry name" value="NA-bd_OB-fold"/>
</dbReference>
<dbReference type="InterPro" id="IPR000266">
    <property type="entry name" value="Ribosomal_uS17"/>
</dbReference>
<dbReference type="InterPro" id="IPR019984">
    <property type="entry name" value="Ribosomal_uS17_bact/chlr"/>
</dbReference>
<dbReference type="InterPro" id="IPR019979">
    <property type="entry name" value="Ribosomal_uS17_CS"/>
</dbReference>
<dbReference type="NCBIfam" id="NF004123">
    <property type="entry name" value="PRK05610.1"/>
    <property type="match status" value="1"/>
</dbReference>
<dbReference type="NCBIfam" id="TIGR03635">
    <property type="entry name" value="uS17_bact"/>
    <property type="match status" value="1"/>
</dbReference>
<dbReference type="PANTHER" id="PTHR10744">
    <property type="entry name" value="40S RIBOSOMAL PROTEIN S11 FAMILY MEMBER"/>
    <property type="match status" value="1"/>
</dbReference>
<dbReference type="PANTHER" id="PTHR10744:SF1">
    <property type="entry name" value="SMALL RIBOSOMAL SUBUNIT PROTEIN US17M"/>
    <property type="match status" value="1"/>
</dbReference>
<dbReference type="Pfam" id="PF00366">
    <property type="entry name" value="Ribosomal_S17"/>
    <property type="match status" value="1"/>
</dbReference>
<dbReference type="PRINTS" id="PR00973">
    <property type="entry name" value="RIBOSOMALS17"/>
</dbReference>
<dbReference type="SUPFAM" id="SSF50249">
    <property type="entry name" value="Nucleic acid-binding proteins"/>
    <property type="match status" value="1"/>
</dbReference>
<dbReference type="PROSITE" id="PS00056">
    <property type="entry name" value="RIBOSOMAL_S17"/>
    <property type="match status" value="1"/>
</dbReference>